<dbReference type="EC" id="5.4.99.12" evidence="1"/>
<dbReference type="EMBL" id="AJ235273">
    <property type="protein sequence ID" value="CAA15281.1"/>
    <property type="status" value="ALT_INIT"/>
    <property type="molecule type" value="Genomic_DNA"/>
</dbReference>
<dbReference type="PIR" id="A71648">
    <property type="entry name" value="A71648"/>
</dbReference>
<dbReference type="RefSeq" id="NP_221205.1">
    <property type="nucleotide sequence ID" value="NC_000963.1"/>
</dbReference>
<dbReference type="RefSeq" id="WP_004596764.1">
    <property type="nucleotide sequence ID" value="NC_000963.1"/>
</dbReference>
<dbReference type="SMR" id="Q9ZCA3"/>
<dbReference type="STRING" id="272947.gene:17555926"/>
<dbReference type="EnsemblBacteria" id="CAA15281">
    <property type="protein sequence ID" value="CAA15281"/>
    <property type="gene ID" value="CAA15281"/>
</dbReference>
<dbReference type="GeneID" id="57569980"/>
<dbReference type="KEGG" id="rpr:RP857"/>
<dbReference type="PATRIC" id="fig|272947.5.peg.896"/>
<dbReference type="eggNOG" id="COG0101">
    <property type="taxonomic scope" value="Bacteria"/>
</dbReference>
<dbReference type="HOGENOM" id="CLU_014673_0_2_5"/>
<dbReference type="OrthoDB" id="9811823at2"/>
<dbReference type="Proteomes" id="UP000002480">
    <property type="component" value="Chromosome"/>
</dbReference>
<dbReference type="GO" id="GO:0003723">
    <property type="term" value="F:RNA binding"/>
    <property type="evidence" value="ECO:0007669"/>
    <property type="project" value="InterPro"/>
</dbReference>
<dbReference type="GO" id="GO:0160147">
    <property type="term" value="F:tRNA pseudouridine(38-40) synthase activity"/>
    <property type="evidence" value="ECO:0007669"/>
    <property type="project" value="UniProtKB-EC"/>
</dbReference>
<dbReference type="GO" id="GO:0031119">
    <property type="term" value="P:tRNA pseudouridine synthesis"/>
    <property type="evidence" value="ECO:0007669"/>
    <property type="project" value="UniProtKB-UniRule"/>
</dbReference>
<dbReference type="CDD" id="cd02570">
    <property type="entry name" value="PseudoU_synth_EcTruA"/>
    <property type="match status" value="1"/>
</dbReference>
<dbReference type="FunFam" id="3.30.70.580:FF:000001">
    <property type="entry name" value="tRNA pseudouridine synthase A"/>
    <property type="match status" value="1"/>
</dbReference>
<dbReference type="Gene3D" id="3.30.70.660">
    <property type="entry name" value="Pseudouridine synthase I, catalytic domain, C-terminal subdomain"/>
    <property type="match status" value="1"/>
</dbReference>
<dbReference type="Gene3D" id="3.30.70.580">
    <property type="entry name" value="Pseudouridine synthase I, catalytic domain, N-terminal subdomain"/>
    <property type="match status" value="1"/>
</dbReference>
<dbReference type="HAMAP" id="MF_00171">
    <property type="entry name" value="TruA"/>
    <property type="match status" value="1"/>
</dbReference>
<dbReference type="InterPro" id="IPR020103">
    <property type="entry name" value="PsdUridine_synth_cat_dom_sf"/>
</dbReference>
<dbReference type="InterPro" id="IPR001406">
    <property type="entry name" value="PsdUridine_synth_TruA"/>
</dbReference>
<dbReference type="InterPro" id="IPR020097">
    <property type="entry name" value="PsdUridine_synth_TruA_a/b_dom"/>
</dbReference>
<dbReference type="InterPro" id="IPR020095">
    <property type="entry name" value="PsdUridine_synth_TruA_C"/>
</dbReference>
<dbReference type="InterPro" id="IPR020094">
    <property type="entry name" value="TruA/RsuA/RluB/E/F_N"/>
</dbReference>
<dbReference type="NCBIfam" id="TIGR00071">
    <property type="entry name" value="hisT_truA"/>
    <property type="match status" value="1"/>
</dbReference>
<dbReference type="PANTHER" id="PTHR11142">
    <property type="entry name" value="PSEUDOURIDYLATE SYNTHASE"/>
    <property type="match status" value="1"/>
</dbReference>
<dbReference type="PANTHER" id="PTHR11142:SF0">
    <property type="entry name" value="TRNA PSEUDOURIDINE SYNTHASE-LIKE 1"/>
    <property type="match status" value="1"/>
</dbReference>
<dbReference type="Pfam" id="PF01416">
    <property type="entry name" value="PseudoU_synth_1"/>
    <property type="match status" value="2"/>
</dbReference>
<dbReference type="PIRSF" id="PIRSF001430">
    <property type="entry name" value="tRNA_psdUrid_synth"/>
    <property type="match status" value="1"/>
</dbReference>
<dbReference type="SUPFAM" id="SSF55120">
    <property type="entry name" value="Pseudouridine synthase"/>
    <property type="match status" value="1"/>
</dbReference>
<evidence type="ECO:0000255" key="1">
    <source>
        <dbReference type="HAMAP-Rule" id="MF_00171"/>
    </source>
</evidence>
<evidence type="ECO:0000305" key="2"/>
<name>TRUA_RICPR</name>
<reference key="1">
    <citation type="journal article" date="1998" name="Nature">
        <title>The genome sequence of Rickettsia prowazekii and the origin of mitochondria.</title>
        <authorList>
            <person name="Andersson S.G.E."/>
            <person name="Zomorodipour A."/>
            <person name="Andersson J.O."/>
            <person name="Sicheritz-Ponten T."/>
            <person name="Alsmark U.C.M."/>
            <person name="Podowski R.M."/>
            <person name="Naeslund A.K."/>
            <person name="Eriksson A.-S."/>
            <person name="Winkler H.H."/>
            <person name="Kurland C.G."/>
        </authorList>
    </citation>
    <scope>NUCLEOTIDE SEQUENCE [LARGE SCALE GENOMIC DNA]</scope>
    <source>
        <strain>Madrid E</strain>
    </source>
</reference>
<gene>
    <name evidence="1" type="primary">truA</name>
    <name type="ordered locus">RP857</name>
</gene>
<keyword id="KW-0413">Isomerase</keyword>
<keyword id="KW-1185">Reference proteome</keyword>
<keyword id="KW-0819">tRNA processing</keyword>
<accession>Q9ZCA3</accession>
<protein>
    <recommendedName>
        <fullName evidence="1">tRNA pseudouridine synthase A</fullName>
        <ecNumber evidence="1">5.4.99.12</ecNumber>
    </recommendedName>
    <alternativeName>
        <fullName evidence="1">tRNA pseudouridine(38-40) synthase</fullName>
    </alternativeName>
    <alternativeName>
        <fullName evidence="1">tRNA pseudouridylate synthase I</fullName>
    </alternativeName>
    <alternativeName>
        <fullName evidence="1">tRNA-uridine isomerase I</fullName>
    </alternativeName>
</protein>
<proteinExistence type="inferred from homology"/>
<organism>
    <name type="scientific">Rickettsia prowazekii (strain Madrid E)</name>
    <dbReference type="NCBI Taxonomy" id="272947"/>
    <lineage>
        <taxon>Bacteria</taxon>
        <taxon>Pseudomonadati</taxon>
        <taxon>Pseudomonadota</taxon>
        <taxon>Alphaproteobacteria</taxon>
        <taxon>Rickettsiales</taxon>
        <taxon>Rickettsiaceae</taxon>
        <taxon>Rickettsieae</taxon>
        <taxon>Rickettsia</taxon>
        <taxon>typhus group</taxon>
    </lineage>
</organism>
<feature type="chain" id="PRO_0000057441" description="tRNA pseudouridine synthase A">
    <location>
        <begin position="1"/>
        <end position="245"/>
    </location>
</feature>
<feature type="active site" description="Nucleophile" evidence="1">
    <location>
        <position position="52"/>
    </location>
</feature>
<feature type="binding site" evidence="1">
    <location>
        <position position="111"/>
    </location>
    <ligand>
        <name>substrate</name>
    </ligand>
</feature>
<comment type="function">
    <text evidence="1">Formation of pseudouridine at positions 38, 39 and 40 in the anticodon stem and loop of transfer RNAs.</text>
</comment>
<comment type="catalytic activity">
    <reaction evidence="1">
        <text>uridine(38/39/40) in tRNA = pseudouridine(38/39/40) in tRNA</text>
        <dbReference type="Rhea" id="RHEA:22376"/>
        <dbReference type="Rhea" id="RHEA-COMP:10085"/>
        <dbReference type="Rhea" id="RHEA-COMP:10087"/>
        <dbReference type="ChEBI" id="CHEBI:65314"/>
        <dbReference type="ChEBI" id="CHEBI:65315"/>
        <dbReference type="EC" id="5.4.99.12"/>
    </reaction>
</comment>
<comment type="subunit">
    <text evidence="1">Homodimer.</text>
</comment>
<comment type="similarity">
    <text evidence="1">Belongs to the tRNA pseudouridine synthase TruA family.</text>
</comment>
<comment type="sequence caution" evidence="2">
    <conflict type="erroneous initiation">
        <sequence resource="EMBL-CDS" id="CAA15281"/>
    </conflict>
</comment>
<sequence>MYRYKITIEYLGTHFAGWQRQAGVLSVQQILEEAIYKFSSEQVTLFGSGRTDAGVHAIGQVAHFDLSKYLEPYKIIKAINYFVRPYDVGVWNCELVSNNFHARFSAISRHYIYRIINRTYPSVIDFNRAWWISSPLDILAMQKAAAYLLGKHDFTSFRSSSCQSKSPIKTLTEINIIKEYEEIKLYISAPSFLHYMVRNIVGSLVLVGKNIWQAEQIKNVLDARDRKIAGPTAPAFGLYFIKAEY</sequence>